<keyword id="KW-0963">Cytoplasm</keyword>
<keyword id="KW-0489">Methyltransferase</keyword>
<keyword id="KW-0698">rRNA processing</keyword>
<keyword id="KW-0949">S-adenosyl-L-methionine</keyword>
<keyword id="KW-0808">Transferase</keyword>
<sequence>MEIPHIPVLLNEVQEIFKNLKTGYFLDCTLGFGGHSEALLKNHPDLKFIACDQDQQALEFSKKRLKDFRNRITFMQSNFSEVLEKISHKEELRGILADIGVSSFQLDNNERGFSVNSDFLDMRMNQNSKISAYEIINTYTKEQLTSIFKDYGELHDAHFIAEKICLERSKNPIKSAKELYQIIGKGKQNHRKISKATLAFQAIRIEVNQELKVLKDFLGHLENLKPKNCILAIISFHSLEDRIVKQFFKKWSKNCICNEKIMRCECGNNHSLGQIITKKAISASKEELLKNSRSSCAKMRAFYFNNLDNK</sequence>
<comment type="function">
    <text evidence="1">Specifically methylates the N4 position of cytidine in position 1402 (C1402) of 16S rRNA.</text>
</comment>
<comment type="catalytic activity">
    <reaction evidence="1">
        <text>cytidine(1402) in 16S rRNA + S-adenosyl-L-methionine = N(4)-methylcytidine(1402) in 16S rRNA + S-adenosyl-L-homocysteine + H(+)</text>
        <dbReference type="Rhea" id="RHEA:42928"/>
        <dbReference type="Rhea" id="RHEA-COMP:10286"/>
        <dbReference type="Rhea" id="RHEA-COMP:10287"/>
        <dbReference type="ChEBI" id="CHEBI:15378"/>
        <dbReference type="ChEBI" id="CHEBI:57856"/>
        <dbReference type="ChEBI" id="CHEBI:59789"/>
        <dbReference type="ChEBI" id="CHEBI:74506"/>
        <dbReference type="ChEBI" id="CHEBI:82748"/>
        <dbReference type="EC" id="2.1.1.199"/>
    </reaction>
</comment>
<comment type="subcellular location">
    <subcellularLocation>
        <location evidence="1">Cytoplasm</location>
    </subcellularLocation>
</comment>
<comment type="similarity">
    <text evidence="1">Belongs to the methyltransferase superfamily. RsmH family.</text>
</comment>
<reference key="1">
    <citation type="journal article" date="2005" name="PLoS Biol.">
        <title>Major structural differences and novel potential virulence mechanisms from the genomes of multiple Campylobacter species.</title>
        <authorList>
            <person name="Fouts D.E."/>
            <person name="Mongodin E.F."/>
            <person name="Mandrell R.E."/>
            <person name="Miller W.G."/>
            <person name="Rasko D.A."/>
            <person name="Ravel J."/>
            <person name="Brinkac L.M."/>
            <person name="DeBoy R.T."/>
            <person name="Parker C.T."/>
            <person name="Daugherty S.C."/>
            <person name="Dodson R.J."/>
            <person name="Durkin A.S."/>
            <person name="Madupu R."/>
            <person name="Sullivan S.A."/>
            <person name="Shetty J.U."/>
            <person name="Ayodeji M.A."/>
            <person name="Shvartsbeyn A."/>
            <person name="Schatz M.C."/>
            <person name="Badger J.H."/>
            <person name="Fraser C.M."/>
            <person name="Nelson K.E."/>
        </authorList>
    </citation>
    <scope>NUCLEOTIDE SEQUENCE [LARGE SCALE GENOMIC DNA]</scope>
    <source>
        <strain>RM1221</strain>
    </source>
</reference>
<name>RSMH_CAMJR</name>
<dbReference type="EC" id="2.1.1.199" evidence="1"/>
<dbReference type="EMBL" id="CP000025">
    <property type="protein sequence ID" value="AAW34579.1"/>
    <property type="molecule type" value="Genomic_DNA"/>
</dbReference>
<dbReference type="SMR" id="Q5HV88"/>
<dbReference type="KEGG" id="cjr:CJE0792"/>
<dbReference type="HOGENOM" id="CLU_038422_3_0_7"/>
<dbReference type="GO" id="GO:0005737">
    <property type="term" value="C:cytoplasm"/>
    <property type="evidence" value="ECO:0007669"/>
    <property type="project" value="UniProtKB-SubCell"/>
</dbReference>
<dbReference type="GO" id="GO:0071424">
    <property type="term" value="F:rRNA (cytosine-N4-)-methyltransferase activity"/>
    <property type="evidence" value="ECO:0007669"/>
    <property type="project" value="UniProtKB-UniRule"/>
</dbReference>
<dbReference type="GO" id="GO:0070475">
    <property type="term" value="P:rRNA base methylation"/>
    <property type="evidence" value="ECO:0007669"/>
    <property type="project" value="UniProtKB-UniRule"/>
</dbReference>
<dbReference type="Gene3D" id="1.10.150.170">
    <property type="entry name" value="Putative methyltransferase TM0872, insert domain"/>
    <property type="match status" value="1"/>
</dbReference>
<dbReference type="Gene3D" id="3.40.50.150">
    <property type="entry name" value="Vaccinia Virus protein VP39"/>
    <property type="match status" value="1"/>
</dbReference>
<dbReference type="HAMAP" id="MF_01007">
    <property type="entry name" value="16SrRNA_methyltr_H"/>
    <property type="match status" value="1"/>
</dbReference>
<dbReference type="InterPro" id="IPR002903">
    <property type="entry name" value="RsmH"/>
</dbReference>
<dbReference type="InterPro" id="IPR023397">
    <property type="entry name" value="SAM-dep_MeTrfase_MraW_recog"/>
</dbReference>
<dbReference type="InterPro" id="IPR029063">
    <property type="entry name" value="SAM-dependent_MTases_sf"/>
</dbReference>
<dbReference type="NCBIfam" id="TIGR00006">
    <property type="entry name" value="16S rRNA (cytosine(1402)-N(4))-methyltransferase RsmH"/>
    <property type="match status" value="1"/>
</dbReference>
<dbReference type="PANTHER" id="PTHR11265:SF0">
    <property type="entry name" value="12S RRNA N4-METHYLCYTIDINE METHYLTRANSFERASE"/>
    <property type="match status" value="1"/>
</dbReference>
<dbReference type="PANTHER" id="PTHR11265">
    <property type="entry name" value="S-ADENOSYL-METHYLTRANSFERASE MRAW"/>
    <property type="match status" value="1"/>
</dbReference>
<dbReference type="Pfam" id="PF01795">
    <property type="entry name" value="Methyltransf_5"/>
    <property type="match status" value="1"/>
</dbReference>
<dbReference type="PIRSF" id="PIRSF004486">
    <property type="entry name" value="MraW"/>
    <property type="match status" value="1"/>
</dbReference>
<dbReference type="SUPFAM" id="SSF81799">
    <property type="entry name" value="Putative methyltransferase TM0872, insert domain"/>
    <property type="match status" value="1"/>
</dbReference>
<dbReference type="SUPFAM" id="SSF53335">
    <property type="entry name" value="S-adenosyl-L-methionine-dependent methyltransferases"/>
    <property type="match status" value="1"/>
</dbReference>
<feature type="chain" id="PRO_0000108599" description="Ribosomal RNA small subunit methyltransferase H">
    <location>
        <begin position="1"/>
        <end position="310"/>
    </location>
</feature>
<feature type="binding site" evidence="1">
    <location>
        <begin position="33"/>
        <end position="35"/>
    </location>
    <ligand>
        <name>S-adenosyl-L-methionine</name>
        <dbReference type="ChEBI" id="CHEBI:59789"/>
    </ligand>
</feature>
<feature type="binding site" evidence="1">
    <location>
        <position position="52"/>
    </location>
    <ligand>
        <name>S-adenosyl-L-methionine</name>
        <dbReference type="ChEBI" id="CHEBI:59789"/>
    </ligand>
</feature>
<feature type="binding site" evidence="1">
    <location>
        <position position="79"/>
    </location>
    <ligand>
        <name>S-adenosyl-L-methionine</name>
        <dbReference type="ChEBI" id="CHEBI:59789"/>
    </ligand>
</feature>
<feature type="binding site" evidence="1">
    <location>
        <position position="98"/>
    </location>
    <ligand>
        <name>S-adenosyl-L-methionine</name>
        <dbReference type="ChEBI" id="CHEBI:59789"/>
    </ligand>
</feature>
<feature type="binding site" evidence="1">
    <location>
        <position position="105"/>
    </location>
    <ligand>
        <name>S-adenosyl-L-methionine</name>
        <dbReference type="ChEBI" id="CHEBI:59789"/>
    </ligand>
</feature>
<evidence type="ECO:0000255" key="1">
    <source>
        <dbReference type="HAMAP-Rule" id="MF_01007"/>
    </source>
</evidence>
<protein>
    <recommendedName>
        <fullName evidence="1">Ribosomal RNA small subunit methyltransferase H</fullName>
        <ecNumber evidence="1">2.1.1.199</ecNumber>
    </recommendedName>
    <alternativeName>
        <fullName evidence="1">16S rRNA m(4)C1402 methyltransferase</fullName>
    </alternativeName>
    <alternativeName>
        <fullName evidence="1">rRNA (cytosine-N(4)-)-methyltransferase RsmH</fullName>
    </alternativeName>
</protein>
<gene>
    <name evidence="1" type="primary">rsmH</name>
    <name type="synonym">mraW</name>
    <name type="ordered locus">CJE0792</name>
</gene>
<organism>
    <name type="scientific">Campylobacter jejuni (strain RM1221)</name>
    <dbReference type="NCBI Taxonomy" id="195099"/>
    <lineage>
        <taxon>Bacteria</taxon>
        <taxon>Pseudomonadati</taxon>
        <taxon>Campylobacterota</taxon>
        <taxon>Epsilonproteobacteria</taxon>
        <taxon>Campylobacterales</taxon>
        <taxon>Campylobacteraceae</taxon>
        <taxon>Campylobacter</taxon>
    </lineage>
</organism>
<accession>Q5HV88</accession>
<proteinExistence type="inferred from homology"/>